<comment type="function">
    <text evidence="1">Key component of the proton channel; it plays a direct role in the translocation of protons across the membrane.</text>
</comment>
<comment type="subunit">
    <text evidence="1">F-type ATPases have 2 components, CF(1) - the catalytic core - and CF(0) - the membrane proton channel. CF(1) has five subunits: alpha(3), beta(3), gamma(1), delta(1), epsilon(1). CF(0) has three main subunits: a(1), b(2) and c(9-12). The alpha and beta chains form an alternating ring which encloses part of the gamma chain. CF(1) is attached to CF(0) by a central stalk formed by the gamma and epsilon chains, while a peripheral stalk is formed by the delta and b chains.</text>
</comment>
<comment type="subcellular location">
    <subcellularLocation>
        <location evidence="1">Cell inner membrane</location>
        <topology evidence="1">Multi-pass membrane protein</topology>
    </subcellularLocation>
</comment>
<comment type="similarity">
    <text evidence="1">Belongs to the ATPase A chain family.</text>
</comment>
<proteinExistence type="inferred from homology"/>
<gene>
    <name evidence="1" type="primary">atpB</name>
    <name type="ordered locus">plu0046</name>
</gene>
<organism>
    <name type="scientific">Photorhabdus laumondii subsp. laumondii (strain DSM 15139 / CIP 105565 / TT01)</name>
    <name type="common">Photorhabdus luminescens subsp. laumondii</name>
    <dbReference type="NCBI Taxonomy" id="243265"/>
    <lineage>
        <taxon>Bacteria</taxon>
        <taxon>Pseudomonadati</taxon>
        <taxon>Pseudomonadota</taxon>
        <taxon>Gammaproteobacteria</taxon>
        <taxon>Enterobacterales</taxon>
        <taxon>Morganellaceae</taxon>
        <taxon>Photorhabdus</taxon>
    </lineage>
</organism>
<dbReference type="EMBL" id="BX571859">
    <property type="protein sequence ID" value="CAE12341.1"/>
    <property type="molecule type" value="Genomic_DNA"/>
</dbReference>
<dbReference type="RefSeq" id="WP_011144458.1">
    <property type="nucleotide sequence ID" value="NC_005126.1"/>
</dbReference>
<dbReference type="SMR" id="Q7NA89"/>
<dbReference type="STRING" id="243265.plu0046"/>
<dbReference type="GeneID" id="48846346"/>
<dbReference type="KEGG" id="plu:plu0046"/>
<dbReference type="eggNOG" id="COG0356">
    <property type="taxonomic scope" value="Bacteria"/>
</dbReference>
<dbReference type="HOGENOM" id="CLU_041018_1_0_6"/>
<dbReference type="OrthoDB" id="9789241at2"/>
<dbReference type="Proteomes" id="UP000002514">
    <property type="component" value="Chromosome"/>
</dbReference>
<dbReference type="GO" id="GO:0005886">
    <property type="term" value="C:plasma membrane"/>
    <property type="evidence" value="ECO:0007669"/>
    <property type="project" value="UniProtKB-SubCell"/>
</dbReference>
<dbReference type="GO" id="GO:0045259">
    <property type="term" value="C:proton-transporting ATP synthase complex"/>
    <property type="evidence" value="ECO:0007669"/>
    <property type="project" value="UniProtKB-KW"/>
</dbReference>
<dbReference type="GO" id="GO:0046933">
    <property type="term" value="F:proton-transporting ATP synthase activity, rotational mechanism"/>
    <property type="evidence" value="ECO:0007669"/>
    <property type="project" value="UniProtKB-UniRule"/>
</dbReference>
<dbReference type="GO" id="GO:0042777">
    <property type="term" value="P:proton motive force-driven plasma membrane ATP synthesis"/>
    <property type="evidence" value="ECO:0007669"/>
    <property type="project" value="TreeGrafter"/>
</dbReference>
<dbReference type="CDD" id="cd00310">
    <property type="entry name" value="ATP-synt_Fo_a_6"/>
    <property type="match status" value="1"/>
</dbReference>
<dbReference type="FunFam" id="1.20.120.220:FF:000002">
    <property type="entry name" value="ATP synthase subunit a"/>
    <property type="match status" value="1"/>
</dbReference>
<dbReference type="Gene3D" id="1.20.120.220">
    <property type="entry name" value="ATP synthase, F0 complex, subunit A"/>
    <property type="match status" value="1"/>
</dbReference>
<dbReference type="HAMAP" id="MF_01393">
    <property type="entry name" value="ATP_synth_a_bact"/>
    <property type="match status" value="1"/>
</dbReference>
<dbReference type="InterPro" id="IPR045082">
    <property type="entry name" value="ATP_syn_F0_a_bact/chloroplast"/>
</dbReference>
<dbReference type="InterPro" id="IPR000568">
    <property type="entry name" value="ATP_synth_F0_asu"/>
</dbReference>
<dbReference type="InterPro" id="IPR023011">
    <property type="entry name" value="ATP_synth_F0_asu_AS"/>
</dbReference>
<dbReference type="InterPro" id="IPR035908">
    <property type="entry name" value="F0_ATP_A_sf"/>
</dbReference>
<dbReference type="NCBIfam" id="TIGR01131">
    <property type="entry name" value="ATP_synt_6_or_A"/>
    <property type="match status" value="1"/>
</dbReference>
<dbReference type="NCBIfam" id="NF004477">
    <property type="entry name" value="PRK05815.1-1"/>
    <property type="match status" value="1"/>
</dbReference>
<dbReference type="PANTHER" id="PTHR42823">
    <property type="entry name" value="ATP SYNTHASE SUBUNIT A, CHLOROPLASTIC"/>
    <property type="match status" value="1"/>
</dbReference>
<dbReference type="PANTHER" id="PTHR42823:SF3">
    <property type="entry name" value="ATP SYNTHASE SUBUNIT A, CHLOROPLASTIC"/>
    <property type="match status" value="1"/>
</dbReference>
<dbReference type="Pfam" id="PF00119">
    <property type="entry name" value="ATP-synt_A"/>
    <property type="match status" value="1"/>
</dbReference>
<dbReference type="PRINTS" id="PR00123">
    <property type="entry name" value="ATPASEA"/>
</dbReference>
<dbReference type="SUPFAM" id="SSF81336">
    <property type="entry name" value="F1F0 ATP synthase subunit A"/>
    <property type="match status" value="1"/>
</dbReference>
<dbReference type="PROSITE" id="PS00449">
    <property type="entry name" value="ATPASE_A"/>
    <property type="match status" value="1"/>
</dbReference>
<accession>Q7NA89</accession>
<name>ATP6_PHOLL</name>
<evidence type="ECO:0000255" key="1">
    <source>
        <dbReference type="HAMAP-Rule" id="MF_01393"/>
    </source>
</evidence>
<reference key="1">
    <citation type="journal article" date="2003" name="Nat. Biotechnol.">
        <title>The genome sequence of the entomopathogenic bacterium Photorhabdus luminescens.</title>
        <authorList>
            <person name="Duchaud E."/>
            <person name="Rusniok C."/>
            <person name="Frangeul L."/>
            <person name="Buchrieser C."/>
            <person name="Givaudan A."/>
            <person name="Taourit S."/>
            <person name="Bocs S."/>
            <person name="Boursaux-Eude C."/>
            <person name="Chandler M."/>
            <person name="Charles J.-F."/>
            <person name="Dassa E."/>
            <person name="Derose R."/>
            <person name="Derzelle S."/>
            <person name="Freyssinet G."/>
            <person name="Gaudriault S."/>
            <person name="Medigue C."/>
            <person name="Lanois A."/>
            <person name="Powell K."/>
            <person name="Siguier P."/>
            <person name="Vincent R."/>
            <person name="Wingate V."/>
            <person name="Zouine M."/>
            <person name="Glaser P."/>
            <person name="Boemare N."/>
            <person name="Danchin A."/>
            <person name="Kunst F."/>
        </authorList>
    </citation>
    <scope>NUCLEOTIDE SEQUENCE [LARGE SCALE GENOMIC DNA]</scope>
    <source>
        <strain>DSM 15139 / CIP 105565 / TT01</strain>
    </source>
</reference>
<protein>
    <recommendedName>
        <fullName evidence="1">ATP synthase subunit a</fullName>
    </recommendedName>
    <alternativeName>
        <fullName evidence="1">ATP synthase F0 sector subunit a</fullName>
    </alternativeName>
    <alternativeName>
        <fullName evidence="1">F-ATPase subunit 6</fullName>
    </alternativeName>
</protein>
<sequence length="274" mass="30481">MSASGEVSTARDYIGHHLNNLQLDLRTFELVDPNSGGSATFWTLNIDSLFFSVVLGILFLYVFRKVAVNATSGVPGKLQTAIELIMGFVDNSVRDMYHGKSKVIAPLALTVFVWVLLMNVMDLLPIDFLPYIGEHFFGLPALRVVPTADVSVTLSMAIGVFVLILYYSIKMKGIGGFTKELTLQPFNHPLFIPINLILEGVSLLSKPVSLGLRLFGNMYAGELIFILIAGLLPWWSQWLLSLPWAIFHILIITLQAFIFMVLTIVYLSMASEEH</sequence>
<keyword id="KW-0066">ATP synthesis</keyword>
<keyword id="KW-0997">Cell inner membrane</keyword>
<keyword id="KW-1003">Cell membrane</keyword>
<keyword id="KW-0138">CF(0)</keyword>
<keyword id="KW-0375">Hydrogen ion transport</keyword>
<keyword id="KW-0406">Ion transport</keyword>
<keyword id="KW-0472">Membrane</keyword>
<keyword id="KW-1185">Reference proteome</keyword>
<keyword id="KW-0812">Transmembrane</keyword>
<keyword id="KW-1133">Transmembrane helix</keyword>
<keyword id="KW-0813">Transport</keyword>
<feature type="chain" id="PRO_0000362373" description="ATP synthase subunit a">
    <location>
        <begin position="1"/>
        <end position="274"/>
    </location>
</feature>
<feature type="transmembrane region" description="Helical" evidence="1">
    <location>
        <begin position="43"/>
        <end position="63"/>
    </location>
</feature>
<feature type="transmembrane region" description="Helical" evidence="1">
    <location>
        <begin position="103"/>
        <end position="123"/>
    </location>
</feature>
<feature type="transmembrane region" description="Helical" evidence="1">
    <location>
        <begin position="144"/>
        <end position="164"/>
    </location>
</feature>
<feature type="transmembrane region" description="Helical" evidence="1">
    <location>
        <begin position="223"/>
        <end position="243"/>
    </location>
</feature>
<feature type="transmembrane region" description="Helical" evidence="1">
    <location>
        <begin position="245"/>
        <end position="265"/>
    </location>
</feature>